<name>RS8_STRPJ</name>
<reference key="1">
    <citation type="journal article" date="2009" name="J. Bacteriol.">
        <title>Role of conjugative elements in the evolution of the multidrug-resistant pandemic clone Streptococcus pneumoniae Spain23F ST81.</title>
        <authorList>
            <person name="Croucher N.J."/>
            <person name="Walker D."/>
            <person name="Romero P."/>
            <person name="Lennard N."/>
            <person name="Paterson G.K."/>
            <person name="Bason N.C."/>
            <person name="Mitchell A.M."/>
            <person name="Quail M.A."/>
            <person name="Andrew P.W."/>
            <person name="Parkhill J."/>
            <person name="Bentley S.D."/>
            <person name="Mitchell T.J."/>
        </authorList>
    </citation>
    <scope>NUCLEOTIDE SEQUENCE [LARGE SCALE GENOMIC DNA]</scope>
    <source>
        <strain>ATCC 700669 / Spain 23F-1</strain>
    </source>
</reference>
<organism>
    <name type="scientific">Streptococcus pneumoniae (strain ATCC 700669 / Spain 23F-1)</name>
    <dbReference type="NCBI Taxonomy" id="561276"/>
    <lineage>
        <taxon>Bacteria</taxon>
        <taxon>Bacillati</taxon>
        <taxon>Bacillota</taxon>
        <taxon>Bacilli</taxon>
        <taxon>Lactobacillales</taxon>
        <taxon>Streptococcaceae</taxon>
        <taxon>Streptococcus</taxon>
    </lineage>
</organism>
<dbReference type="EMBL" id="FM211187">
    <property type="protein sequence ID" value="CAR68073.1"/>
    <property type="molecule type" value="Genomic_DNA"/>
</dbReference>
<dbReference type="RefSeq" id="WP_000245505.1">
    <property type="nucleotide sequence ID" value="NC_011900.1"/>
</dbReference>
<dbReference type="SMR" id="B8ZKP4"/>
<dbReference type="GeneID" id="45652295"/>
<dbReference type="KEGG" id="sne:SPN23F02130"/>
<dbReference type="HOGENOM" id="CLU_098428_0_2_9"/>
<dbReference type="GO" id="GO:1990904">
    <property type="term" value="C:ribonucleoprotein complex"/>
    <property type="evidence" value="ECO:0007669"/>
    <property type="project" value="UniProtKB-KW"/>
</dbReference>
<dbReference type="GO" id="GO:0005840">
    <property type="term" value="C:ribosome"/>
    <property type="evidence" value="ECO:0007669"/>
    <property type="project" value="UniProtKB-KW"/>
</dbReference>
<dbReference type="GO" id="GO:0019843">
    <property type="term" value="F:rRNA binding"/>
    <property type="evidence" value="ECO:0007669"/>
    <property type="project" value="UniProtKB-UniRule"/>
</dbReference>
<dbReference type="GO" id="GO:0003735">
    <property type="term" value="F:structural constituent of ribosome"/>
    <property type="evidence" value="ECO:0007669"/>
    <property type="project" value="InterPro"/>
</dbReference>
<dbReference type="GO" id="GO:0006412">
    <property type="term" value="P:translation"/>
    <property type="evidence" value="ECO:0007669"/>
    <property type="project" value="UniProtKB-UniRule"/>
</dbReference>
<dbReference type="FunFam" id="3.30.1370.30:FF:000002">
    <property type="entry name" value="30S ribosomal protein S8"/>
    <property type="match status" value="1"/>
</dbReference>
<dbReference type="FunFam" id="3.30.1490.10:FF:000001">
    <property type="entry name" value="30S ribosomal protein S8"/>
    <property type="match status" value="1"/>
</dbReference>
<dbReference type="Gene3D" id="3.30.1370.30">
    <property type="match status" value="1"/>
</dbReference>
<dbReference type="Gene3D" id="3.30.1490.10">
    <property type="match status" value="1"/>
</dbReference>
<dbReference type="HAMAP" id="MF_01302_B">
    <property type="entry name" value="Ribosomal_uS8_B"/>
    <property type="match status" value="1"/>
</dbReference>
<dbReference type="InterPro" id="IPR000630">
    <property type="entry name" value="Ribosomal_uS8"/>
</dbReference>
<dbReference type="InterPro" id="IPR047863">
    <property type="entry name" value="Ribosomal_uS8_CS"/>
</dbReference>
<dbReference type="InterPro" id="IPR035987">
    <property type="entry name" value="Ribosomal_uS8_sf"/>
</dbReference>
<dbReference type="NCBIfam" id="NF001109">
    <property type="entry name" value="PRK00136.1"/>
    <property type="match status" value="1"/>
</dbReference>
<dbReference type="PANTHER" id="PTHR11758">
    <property type="entry name" value="40S RIBOSOMAL PROTEIN S15A"/>
    <property type="match status" value="1"/>
</dbReference>
<dbReference type="Pfam" id="PF00410">
    <property type="entry name" value="Ribosomal_S8"/>
    <property type="match status" value="1"/>
</dbReference>
<dbReference type="SUPFAM" id="SSF56047">
    <property type="entry name" value="Ribosomal protein S8"/>
    <property type="match status" value="1"/>
</dbReference>
<dbReference type="PROSITE" id="PS00053">
    <property type="entry name" value="RIBOSOMAL_S8"/>
    <property type="match status" value="1"/>
</dbReference>
<sequence>MVMTDPIADFLTRIRNANQAKHEVLEVPASNIKKGIAEILKREGFVKNVEIIEDDKQGVIRVFLKYGPNGEKVITNLKRVSKPGLRVYKKREDLPKVLNGLGIAILSTSEGLLTDKEARQKNVGGEVIAYVW</sequence>
<proteinExistence type="inferred from homology"/>
<evidence type="ECO:0000255" key="1">
    <source>
        <dbReference type="HAMAP-Rule" id="MF_01302"/>
    </source>
</evidence>
<evidence type="ECO:0000305" key="2"/>
<protein>
    <recommendedName>
        <fullName evidence="1">Small ribosomal subunit protein uS8</fullName>
    </recommendedName>
    <alternativeName>
        <fullName evidence="2">30S ribosomal protein S8</fullName>
    </alternativeName>
</protein>
<comment type="function">
    <text evidence="1">One of the primary rRNA binding proteins, it binds directly to 16S rRNA central domain where it helps coordinate assembly of the platform of the 30S subunit.</text>
</comment>
<comment type="subunit">
    <text evidence="1">Part of the 30S ribosomal subunit. Contacts proteins S5 and S12.</text>
</comment>
<comment type="similarity">
    <text evidence="1">Belongs to the universal ribosomal protein uS8 family.</text>
</comment>
<gene>
    <name evidence="1" type="primary">rpsH</name>
    <name type="ordered locus">SPN23F02130</name>
</gene>
<keyword id="KW-0687">Ribonucleoprotein</keyword>
<keyword id="KW-0689">Ribosomal protein</keyword>
<keyword id="KW-0694">RNA-binding</keyword>
<keyword id="KW-0699">rRNA-binding</keyword>
<accession>B8ZKP4</accession>
<feature type="chain" id="PRO_1000165353" description="Small ribosomal subunit protein uS8">
    <location>
        <begin position="1"/>
        <end position="132"/>
    </location>
</feature>